<accession>Q256J8</accession>
<dbReference type="EMBL" id="AP006861">
    <property type="protein sequence ID" value="BAE80790.1"/>
    <property type="molecule type" value="Genomic_DNA"/>
</dbReference>
<dbReference type="RefSeq" id="WP_011457575.1">
    <property type="nucleotide sequence ID" value="NC_007899.1"/>
</dbReference>
<dbReference type="SMR" id="Q256J8"/>
<dbReference type="STRING" id="264202.CF0018"/>
<dbReference type="KEGG" id="cfe:CF0018"/>
<dbReference type="eggNOG" id="COG0468">
    <property type="taxonomic scope" value="Bacteria"/>
</dbReference>
<dbReference type="HOGENOM" id="CLU_040469_3_2_0"/>
<dbReference type="OrthoDB" id="9776733at2"/>
<dbReference type="Proteomes" id="UP000001260">
    <property type="component" value="Chromosome"/>
</dbReference>
<dbReference type="GO" id="GO:0005829">
    <property type="term" value="C:cytosol"/>
    <property type="evidence" value="ECO:0007669"/>
    <property type="project" value="TreeGrafter"/>
</dbReference>
<dbReference type="GO" id="GO:0005524">
    <property type="term" value="F:ATP binding"/>
    <property type="evidence" value="ECO:0007669"/>
    <property type="project" value="UniProtKB-UniRule"/>
</dbReference>
<dbReference type="GO" id="GO:0016887">
    <property type="term" value="F:ATP hydrolysis activity"/>
    <property type="evidence" value="ECO:0007669"/>
    <property type="project" value="InterPro"/>
</dbReference>
<dbReference type="GO" id="GO:0140664">
    <property type="term" value="F:ATP-dependent DNA damage sensor activity"/>
    <property type="evidence" value="ECO:0007669"/>
    <property type="project" value="InterPro"/>
</dbReference>
<dbReference type="GO" id="GO:0003684">
    <property type="term" value="F:damaged DNA binding"/>
    <property type="evidence" value="ECO:0007669"/>
    <property type="project" value="UniProtKB-UniRule"/>
</dbReference>
<dbReference type="GO" id="GO:0003697">
    <property type="term" value="F:single-stranded DNA binding"/>
    <property type="evidence" value="ECO:0007669"/>
    <property type="project" value="UniProtKB-UniRule"/>
</dbReference>
<dbReference type="GO" id="GO:0006310">
    <property type="term" value="P:DNA recombination"/>
    <property type="evidence" value="ECO:0007669"/>
    <property type="project" value="UniProtKB-UniRule"/>
</dbReference>
<dbReference type="GO" id="GO:0006281">
    <property type="term" value="P:DNA repair"/>
    <property type="evidence" value="ECO:0007669"/>
    <property type="project" value="UniProtKB-UniRule"/>
</dbReference>
<dbReference type="GO" id="GO:0009432">
    <property type="term" value="P:SOS response"/>
    <property type="evidence" value="ECO:0007669"/>
    <property type="project" value="UniProtKB-UniRule"/>
</dbReference>
<dbReference type="CDD" id="cd00983">
    <property type="entry name" value="RecA"/>
    <property type="match status" value="1"/>
</dbReference>
<dbReference type="FunFam" id="3.40.50.300:FF:000087">
    <property type="entry name" value="Recombinase RecA"/>
    <property type="match status" value="1"/>
</dbReference>
<dbReference type="Gene3D" id="3.40.50.300">
    <property type="entry name" value="P-loop containing nucleotide triphosphate hydrolases"/>
    <property type="match status" value="1"/>
</dbReference>
<dbReference type="HAMAP" id="MF_00268">
    <property type="entry name" value="RecA"/>
    <property type="match status" value="1"/>
</dbReference>
<dbReference type="InterPro" id="IPR003593">
    <property type="entry name" value="AAA+_ATPase"/>
</dbReference>
<dbReference type="InterPro" id="IPR013765">
    <property type="entry name" value="DNA_recomb/repair_RecA"/>
</dbReference>
<dbReference type="InterPro" id="IPR020584">
    <property type="entry name" value="DNA_recomb/repair_RecA_CS"/>
</dbReference>
<dbReference type="InterPro" id="IPR027417">
    <property type="entry name" value="P-loop_NTPase"/>
</dbReference>
<dbReference type="InterPro" id="IPR049261">
    <property type="entry name" value="RecA-like_C"/>
</dbReference>
<dbReference type="InterPro" id="IPR049428">
    <property type="entry name" value="RecA-like_N"/>
</dbReference>
<dbReference type="InterPro" id="IPR020588">
    <property type="entry name" value="RecA_ATP-bd"/>
</dbReference>
<dbReference type="InterPro" id="IPR023400">
    <property type="entry name" value="RecA_C_sf"/>
</dbReference>
<dbReference type="InterPro" id="IPR020587">
    <property type="entry name" value="RecA_monomer-monomer_interface"/>
</dbReference>
<dbReference type="NCBIfam" id="TIGR02012">
    <property type="entry name" value="tigrfam_recA"/>
    <property type="match status" value="1"/>
</dbReference>
<dbReference type="PANTHER" id="PTHR45900:SF1">
    <property type="entry name" value="MITOCHONDRIAL DNA REPAIR PROTEIN RECA HOMOLOG-RELATED"/>
    <property type="match status" value="1"/>
</dbReference>
<dbReference type="PANTHER" id="PTHR45900">
    <property type="entry name" value="RECA"/>
    <property type="match status" value="1"/>
</dbReference>
<dbReference type="Pfam" id="PF00154">
    <property type="entry name" value="RecA"/>
    <property type="match status" value="1"/>
</dbReference>
<dbReference type="Pfam" id="PF21096">
    <property type="entry name" value="RecA_C"/>
    <property type="match status" value="1"/>
</dbReference>
<dbReference type="PRINTS" id="PR00142">
    <property type="entry name" value="RECA"/>
</dbReference>
<dbReference type="SMART" id="SM00382">
    <property type="entry name" value="AAA"/>
    <property type="match status" value="1"/>
</dbReference>
<dbReference type="SUPFAM" id="SSF52540">
    <property type="entry name" value="P-loop containing nucleoside triphosphate hydrolases"/>
    <property type="match status" value="1"/>
</dbReference>
<dbReference type="SUPFAM" id="SSF54752">
    <property type="entry name" value="RecA protein, C-terminal domain"/>
    <property type="match status" value="1"/>
</dbReference>
<dbReference type="PROSITE" id="PS00321">
    <property type="entry name" value="RECA_1"/>
    <property type="match status" value="1"/>
</dbReference>
<dbReference type="PROSITE" id="PS50162">
    <property type="entry name" value="RECA_2"/>
    <property type="match status" value="1"/>
</dbReference>
<dbReference type="PROSITE" id="PS50163">
    <property type="entry name" value="RECA_3"/>
    <property type="match status" value="1"/>
</dbReference>
<reference key="1">
    <citation type="journal article" date="2006" name="DNA Res.">
        <title>Genome sequence of the cat pathogen, Chlamydophila felis.</title>
        <authorList>
            <person name="Azuma Y."/>
            <person name="Hirakawa H."/>
            <person name="Yamashita A."/>
            <person name="Cai Y."/>
            <person name="Rahman M.A."/>
            <person name="Suzuki H."/>
            <person name="Mitaku S."/>
            <person name="Toh H."/>
            <person name="Goto S."/>
            <person name="Murakami T."/>
            <person name="Sugi K."/>
            <person name="Hayashi H."/>
            <person name="Fukushi H."/>
            <person name="Hattori M."/>
            <person name="Kuhara S."/>
            <person name="Shirai M."/>
        </authorList>
    </citation>
    <scope>NUCLEOTIDE SEQUENCE [LARGE SCALE GENOMIC DNA]</scope>
    <source>
        <strain>Fe/C-56</strain>
    </source>
</reference>
<protein>
    <recommendedName>
        <fullName evidence="1">Protein RecA</fullName>
    </recommendedName>
    <alternativeName>
        <fullName evidence="1">Recombinase A</fullName>
    </alternativeName>
</protein>
<proteinExistence type="inferred from homology"/>
<feature type="chain" id="PRO_1000047898" description="Protein RecA">
    <location>
        <begin position="1"/>
        <end position="350"/>
    </location>
</feature>
<feature type="binding site" evidence="1">
    <location>
        <begin position="67"/>
        <end position="74"/>
    </location>
    <ligand>
        <name>ATP</name>
        <dbReference type="ChEBI" id="CHEBI:30616"/>
    </ligand>
</feature>
<sequence length="350" mass="37721">MNVPDRKKALEAAIAYIEKQFGSGSIMSLGKHSATHEISTIKTGALSLDLALGIGGVPKGRIVEIFGPESSGKTTLATHIVANAQKMGGVAAYIDAEHALDPGYASLIGANINDLMISQPDCGEDALSIAELLARSGAVDVIVIDSVAALVPKSELEGDIGDVHVGLQARMMSQALRKLTATLARSQTCAIFINQIREKIGVSFGNPETTTGGRALKFYSSIRIDIRRIGAIKGNESFDLGNRIKVKVAKNKLAPPFRTAEFDILFNEGISSAGCILDLAVEHNIVEKKGSWFNYQDRKLGQGREAVREELKKNKKLFDELEKRILDVTSVPKATVVEEKKEEQSIQPVV</sequence>
<name>RECA_CHLFF</name>
<organism>
    <name type="scientific">Chlamydia felis (strain Fe/C-56)</name>
    <name type="common">Chlamydophila felis</name>
    <dbReference type="NCBI Taxonomy" id="264202"/>
    <lineage>
        <taxon>Bacteria</taxon>
        <taxon>Pseudomonadati</taxon>
        <taxon>Chlamydiota</taxon>
        <taxon>Chlamydiia</taxon>
        <taxon>Chlamydiales</taxon>
        <taxon>Chlamydiaceae</taxon>
        <taxon>Chlamydia/Chlamydophila group</taxon>
        <taxon>Chlamydia</taxon>
    </lineage>
</organism>
<evidence type="ECO:0000255" key="1">
    <source>
        <dbReference type="HAMAP-Rule" id="MF_00268"/>
    </source>
</evidence>
<gene>
    <name evidence="1" type="primary">recA</name>
    <name type="ordered locus">CF0018</name>
</gene>
<comment type="function">
    <text evidence="1">Can catalyze the hydrolysis of ATP in the presence of single-stranded DNA, the ATP-dependent uptake of single-stranded DNA by duplex DNA, and the ATP-dependent hybridization of homologous single-stranded DNAs. It interacts with LexA causing its activation and leading to its autocatalytic cleavage.</text>
</comment>
<comment type="subcellular location">
    <subcellularLocation>
        <location evidence="1">Cytoplasm</location>
    </subcellularLocation>
</comment>
<comment type="similarity">
    <text evidence="1">Belongs to the RecA family.</text>
</comment>
<keyword id="KW-0067">ATP-binding</keyword>
<keyword id="KW-0963">Cytoplasm</keyword>
<keyword id="KW-0227">DNA damage</keyword>
<keyword id="KW-0233">DNA recombination</keyword>
<keyword id="KW-0234">DNA repair</keyword>
<keyword id="KW-0238">DNA-binding</keyword>
<keyword id="KW-0547">Nucleotide-binding</keyword>
<keyword id="KW-0742">SOS response</keyword>